<reference key="1">
    <citation type="journal article" date="2003" name="Proc. Natl. Acad. Sci. U.S.A.">
        <title>The complete genome sequence of Mycobacterium bovis.</title>
        <authorList>
            <person name="Garnier T."/>
            <person name="Eiglmeier K."/>
            <person name="Camus J.-C."/>
            <person name="Medina N."/>
            <person name="Mansoor H."/>
            <person name="Pryor M."/>
            <person name="Duthoy S."/>
            <person name="Grondin S."/>
            <person name="Lacroix C."/>
            <person name="Monsempe C."/>
            <person name="Simon S."/>
            <person name="Harris B."/>
            <person name="Atkin R."/>
            <person name="Doggett J."/>
            <person name="Mayes R."/>
            <person name="Keating L."/>
            <person name="Wheeler P.R."/>
            <person name="Parkhill J."/>
            <person name="Barrell B.G."/>
            <person name="Cole S.T."/>
            <person name="Gordon S.V."/>
            <person name="Hewinson R.G."/>
        </authorList>
    </citation>
    <scope>NUCLEOTIDE SEQUENCE [LARGE SCALE GENOMIC DNA]</scope>
    <source>
        <strain>ATCC BAA-935 / AF2122/97</strain>
    </source>
</reference>
<reference key="2">
    <citation type="journal article" date="2017" name="Genome Announc.">
        <title>Updated reference genome sequence and annotation of Mycobacterium bovis AF2122/97.</title>
        <authorList>
            <person name="Malone K.M."/>
            <person name="Farrell D."/>
            <person name="Stuber T.P."/>
            <person name="Schubert O.T."/>
            <person name="Aebersold R."/>
            <person name="Robbe-Austerman S."/>
            <person name="Gordon S.V."/>
        </authorList>
    </citation>
    <scope>NUCLEOTIDE SEQUENCE [LARGE SCALE GENOMIC DNA]</scope>
    <scope>GENOME REANNOTATION</scope>
    <source>
        <strain>ATCC BAA-935 / AF2122/97</strain>
    </source>
</reference>
<accession>P0A661</accession>
<accession>A0A1R3Y0C1</accession>
<accession>P50042</accession>
<accession>X2BJE0</accession>
<sequence>MARLSRERYAQLYGPTTGDRIRLADTNLLVEVTEDRCGGPGLAGDEAVFGGGKVLRESMGQGRASRADGAPDTVITGAVIIDYWGIIKADIGIRDGRIVGIGKAGNPDIMTGVHRDLVVGPSTEIISGNRRIVTAGTVDCHVHLICPQIIVEALAAGTTTIIGGGTGPAEGTKATTVTPGEWHLARMLESLDGWPVNFALLGKGNTVNPDALWEQLRGGASGFKLHEDWGSTPAAIDTCLAVADVAGVQVALHSDTLNETGFVEDTIGAIAGRSIHAYHTEGAGGGHAPDIITVAAQPNVLPSSTNPTRPHTVNTLDEHLDMLMVCHHLNPRIPEDLAFAESRIRPSTIAAEDVLHDMGAISMIGSDSQAMGRVGEVVLRTWQTAHVMKARRGALEGDPSGSQAADNNRVRRYIAKYTICPAIAHGMDHLIGSVEVGKLADLVLWEPAFFGVRPHVVLKGGAIAWAAMGDANASIPTPQPVLPRPMFGAAAATAAATSVHFVAPQSIDARLADRLAVNRGLAPVADVRAVGKTDLPLNDALPSIEVDPDTFTVRIDGQVWQPQPAAELPMTQRYFLF</sequence>
<evidence type="ECO:0000255" key="1">
    <source>
        <dbReference type="HAMAP-Rule" id="MF_01953"/>
    </source>
</evidence>
<gene>
    <name evidence="1" type="primary">ureC</name>
    <name type="ordered locus">BQ2027_MB1881</name>
</gene>
<feature type="chain" id="PRO_0000067550" description="Urease subunit alpha">
    <location>
        <begin position="1"/>
        <end position="577"/>
    </location>
</feature>
<feature type="domain" description="Urease" evidence="1">
    <location>
        <begin position="136"/>
        <end position="577"/>
    </location>
</feature>
<feature type="active site" description="Proton donor" evidence="1">
    <location>
        <position position="327"/>
    </location>
</feature>
<feature type="binding site" evidence="1">
    <location>
        <position position="141"/>
    </location>
    <ligand>
        <name>Ni(2+)</name>
        <dbReference type="ChEBI" id="CHEBI:49786"/>
        <label>1</label>
    </ligand>
</feature>
<feature type="binding site" evidence="1">
    <location>
        <position position="143"/>
    </location>
    <ligand>
        <name>Ni(2+)</name>
        <dbReference type="ChEBI" id="CHEBI:49786"/>
        <label>1</label>
    </ligand>
</feature>
<feature type="binding site" description="via carbamate group" evidence="1">
    <location>
        <position position="224"/>
    </location>
    <ligand>
        <name>Ni(2+)</name>
        <dbReference type="ChEBI" id="CHEBI:49786"/>
        <label>1</label>
    </ligand>
</feature>
<feature type="binding site" description="via carbamate group" evidence="1">
    <location>
        <position position="224"/>
    </location>
    <ligand>
        <name>Ni(2+)</name>
        <dbReference type="ChEBI" id="CHEBI:49786"/>
        <label>2</label>
    </ligand>
</feature>
<feature type="binding site" evidence="1">
    <location>
        <position position="226"/>
    </location>
    <ligand>
        <name>substrate</name>
    </ligand>
</feature>
<feature type="binding site" evidence="1">
    <location>
        <position position="253"/>
    </location>
    <ligand>
        <name>Ni(2+)</name>
        <dbReference type="ChEBI" id="CHEBI:49786"/>
        <label>2</label>
    </ligand>
</feature>
<feature type="binding site" evidence="1">
    <location>
        <position position="279"/>
    </location>
    <ligand>
        <name>Ni(2+)</name>
        <dbReference type="ChEBI" id="CHEBI:49786"/>
        <label>2</label>
    </ligand>
</feature>
<feature type="binding site" evidence="1">
    <location>
        <position position="367"/>
    </location>
    <ligand>
        <name>Ni(2+)</name>
        <dbReference type="ChEBI" id="CHEBI:49786"/>
        <label>1</label>
    </ligand>
</feature>
<feature type="modified residue" description="N6-carboxylysine" evidence="1">
    <location>
        <position position="224"/>
    </location>
</feature>
<comment type="catalytic activity">
    <reaction evidence="1">
        <text>urea + 2 H2O + H(+) = hydrogencarbonate + 2 NH4(+)</text>
        <dbReference type="Rhea" id="RHEA:20557"/>
        <dbReference type="ChEBI" id="CHEBI:15377"/>
        <dbReference type="ChEBI" id="CHEBI:15378"/>
        <dbReference type="ChEBI" id="CHEBI:16199"/>
        <dbReference type="ChEBI" id="CHEBI:17544"/>
        <dbReference type="ChEBI" id="CHEBI:28938"/>
        <dbReference type="EC" id="3.5.1.5"/>
    </reaction>
</comment>
<comment type="cofactor">
    <cofactor evidence="1">
        <name>Ni cation</name>
        <dbReference type="ChEBI" id="CHEBI:25516"/>
    </cofactor>
    <text evidence="1">Binds 2 nickel ions per subunit.</text>
</comment>
<comment type="pathway">
    <text evidence="1">Nitrogen metabolism; urea degradation; CO(2) and NH(3) from urea (urease route): step 1/1.</text>
</comment>
<comment type="subunit">
    <text evidence="1">Heterotrimer of UreA (gamma), UreB (beta) and UreC (alpha) subunits. Three heterotrimers associate to form the active enzyme.</text>
</comment>
<comment type="subcellular location">
    <subcellularLocation>
        <location evidence="1">Cytoplasm</location>
    </subcellularLocation>
</comment>
<comment type="PTM">
    <text evidence="1">Carboxylation allows a single lysine to coordinate two nickel ions.</text>
</comment>
<comment type="similarity">
    <text evidence="1">Belongs to the metallo-dependent hydrolases superfamily. Urease alpha subunit family.</text>
</comment>
<organism>
    <name type="scientific">Mycobacterium bovis (strain ATCC BAA-935 / AF2122/97)</name>
    <dbReference type="NCBI Taxonomy" id="233413"/>
    <lineage>
        <taxon>Bacteria</taxon>
        <taxon>Bacillati</taxon>
        <taxon>Actinomycetota</taxon>
        <taxon>Actinomycetes</taxon>
        <taxon>Mycobacteriales</taxon>
        <taxon>Mycobacteriaceae</taxon>
        <taxon>Mycobacterium</taxon>
        <taxon>Mycobacterium tuberculosis complex</taxon>
    </lineage>
</organism>
<name>URE1_MYCBO</name>
<keyword id="KW-0963">Cytoplasm</keyword>
<keyword id="KW-0378">Hydrolase</keyword>
<keyword id="KW-0479">Metal-binding</keyword>
<keyword id="KW-0533">Nickel</keyword>
<keyword id="KW-1185">Reference proteome</keyword>
<protein>
    <recommendedName>
        <fullName evidence="1">Urease subunit alpha</fullName>
        <ecNumber evidence="1">3.5.1.5</ecNumber>
    </recommendedName>
    <alternativeName>
        <fullName evidence="1">Urea amidohydrolase subunit alpha</fullName>
    </alternativeName>
</protein>
<dbReference type="EC" id="3.5.1.5" evidence="1"/>
<dbReference type="EMBL" id="LT708304">
    <property type="protein sequence ID" value="SIU00485.1"/>
    <property type="molecule type" value="Genomic_DNA"/>
</dbReference>
<dbReference type="RefSeq" id="NP_855533.1">
    <property type="nucleotide sequence ID" value="NC_002945.3"/>
</dbReference>
<dbReference type="RefSeq" id="WP_003899049.1">
    <property type="nucleotide sequence ID" value="NC_002945.4"/>
</dbReference>
<dbReference type="SMR" id="P0A661"/>
<dbReference type="MEROPS" id="M38.982"/>
<dbReference type="KEGG" id="mbo:BQ2027_MB1881"/>
<dbReference type="PATRIC" id="fig|233413.5.peg.2062"/>
<dbReference type="UniPathway" id="UPA00258">
    <property type="reaction ID" value="UER00370"/>
</dbReference>
<dbReference type="Proteomes" id="UP000001419">
    <property type="component" value="Chromosome"/>
</dbReference>
<dbReference type="GO" id="GO:0005737">
    <property type="term" value="C:cytoplasm"/>
    <property type="evidence" value="ECO:0007669"/>
    <property type="project" value="UniProtKB-SubCell"/>
</dbReference>
<dbReference type="GO" id="GO:0016151">
    <property type="term" value="F:nickel cation binding"/>
    <property type="evidence" value="ECO:0007669"/>
    <property type="project" value="UniProtKB-UniRule"/>
</dbReference>
<dbReference type="GO" id="GO:0009039">
    <property type="term" value="F:urease activity"/>
    <property type="evidence" value="ECO:0007669"/>
    <property type="project" value="UniProtKB-UniRule"/>
</dbReference>
<dbReference type="GO" id="GO:0043419">
    <property type="term" value="P:urea catabolic process"/>
    <property type="evidence" value="ECO:0007669"/>
    <property type="project" value="UniProtKB-UniRule"/>
</dbReference>
<dbReference type="CDD" id="cd00375">
    <property type="entry name" value="Urease_alpha"/>
    <property type="match status" value="1"/>
</dbReference>
<dbReference type="Gene3D" id="3.20.20.140">
    <property type="entry name" value="Metal-dependent hydrolases"/>
    <property type="match status" value="1"/>
</dbReference>
<dbReference type="Gene3D" id="2.30.40.10">
    <property type="entry name" value="Urease, subunit C, domain 1"/>
    <property type="match status" value="1"/>
</dbReference>
<dbReference type="HAMAP" id="MF_01953">
    <property type="entry name" value="Urease_alpha"/>
    <property type="match status" value="1"/>
</dbReference>
<dbReference type="InterPro" id="IPR006680">
    <property type="entry name" value="Amidohydro-rel"/>
</dbReference>
<dbReference type="InterPro" id="IPR011059">
    <property type="entry name" value="Metal-dep_hydrolase_composite"/>
</dbReference>
<dbReference type="InterPro" id="IPR032466">
    <property type="entry name" value="Metal_Hydrolase"/>
</dbReference>
<dbReference type="InterPro" id="IPR011612">
    <property type="entry name" value="Urease_alpha_N_dom"/>
</dbReference>
<dbReference type="InterPro" id="IPR050112">
    <property type="entry name" value="Urease_alpha_subunit"/>
</dbReference>
<dbReference type="InterPro" id="IPR017950">
    <property type="entry name" value="Urease_AS"/>
</dbReference>
<dbReference type="InterPro" id="IPR005848">
    <property type="entry name" value="Urease_asu"/>
</dbReference>
<dbReference type="InterPro" id="IPR017951">
    <property type="entry name" value="Urease_asu_c"/>
</dbReference>
<dbReference type="InterPro" id="IPR029754">
    <property type="entry name" value="Urease_Ni-bd"/>
</dbReference>
<dbReference type="NCBIfam" id="NF009685">
    <property type="entry name" value="PRK13206.1"/>
    <property type="match status" value="1"/>
</dbReference>
<dbReference type="NCBIfam" id="NF009686">
    <property type="entry name" value="PRK13207.1"/>
    <property type="match status" value="1"/>
</dbReference>
<dbReference type="NCBIfam" id="TIGR01792">
    <property type="entry name" value="urease_alph"/>
    <property type="match status" value="1"/>
</dbReference>
<dbReference type="PANTHER" id="PTHR43440">
    <property type="entry name" value="UREASE"/>
    <property type="match status" value="1"/>
</dbReference>
<dbReference type="PANTHER" id="PTHR43440:SF1">
    <property type="entry name" value="UREASE"/>
    <property type="match status" value="1"/>
</dbReference>
<dbReference type="Pfam" id="PF01979">
    <property type="entry name" value="Amidohydro_1"/>
    <property type="match status" value="1"/>
</dbReference>
<dbReference type="Pfam" id="PF00449">
    <property type="entry name" value="Urease_alpha"/>
    <property type="match status" value="1"/>
</dbReference>
<dbReference type="PRINTS" id="PR01752">
    <property type="entry name" value="UREASE"/>
</dbReference>
<dbReference type="SUPFAM" id="SSF51338">
    <property type="entry name" value="Composite domain of metallo-dependent hydrolases"/>
    <property type="match status" value="2"/>
</dbReference>
<dbReference type="SUPFAM" id="SSF51556">
    <property type="entry name" value="Metallo-dependent hydrolases"/>
    <property type="match status" value="1"/>
</dbReference>
<dbReference type="PROSITE" id="PS01120">
    <property type="entry name" value="UREASE_1"/>
    <property type="match status" value="1"/>
</dbReference>
<dbReference type="PROSITE" id="PS00145">
    <property type="entry name" value="UREASE_2"/>
    <property type="match status" value="1"/>
</dbReference>
<dbReference type="PROSITE" id="PS51368">
    <property type="entry name" value="UREASE_3"/>
    <property type="match status" value="1"/>
</dbReference>
<proteinExistence type="inferred from homology"/>